<accession>Q54HX8</accession>
<proteinExistence type="inferred from homology"/>
<comment type="subcellular location">
    <subcellularLocation>
        <location evidence="2">Late endosome membrane</location>
        <topology evidence="2">Peripheral membrane protein</topology>
        <orientation evidence="2">Cytoplasmic side</orientation>
    </subcellularLocation>
    <subcellularLocation>
        <location evidence="2">Lysosome membrane</location>
        <topology evidence="2">Peripheral membrane protein</topology>
        <orientation evidence="2">Cytoplasmic side</orientation>
    </subcellularLocation>
</comment>
<comment type="domain">
    <text evidence="1">The LITAF domain is stabilized by a bound zinc ion. The LITAF domain contains an amphipathic helix that mediates interaction with lipid membranes.</text>
</comment>
<comment type="similarity">
    <text evidence="5">Belongs to the CDIP1/LITAF family.</text>
</comment>
<keyword id="KW-0967">Endosome</keyword>
<keyword id="KW-0458">Lysosome</keyword>
<keyword id="KW-0472">Membrane</keyword>
<keyword id="KW-0479">Metal-binding</keyword>
<keyword id="KW-1185">Reference proteome</keyword>
<keyword id="KW-0862">Zinc</keyword>
<name>CDIP1_DICDI</name>
<protein>
    <recommendedName>
        <fullName>Cell death-inducing p53-target protein 1 homolog</fullName>
    </recommendedName>
    <alternativeName>
        <fullName>Protein LITAF homolog</fullName>
    </alternativeName>
</protein>
<dbReference type="EMBL" id="AAFI02000130">
    <property type="protein sequence ID" value="EAL62882.1"/>
    <property type="molecule type" value="Genomic_DNA"/>
</dbReference>
<dbReference type="RefSeq" id="XP_636385.1">
    <property type="nucleotide sequence ID" value="XM_631293.1"/>
</dbReference>
<dbReference type="PaxDb" id="44689-DDB0302421"/>
<dbReference type="EnsemblProtists" id="EAL62882">
    <property type="protein sequence ID" value="EAL62882"/>
    <property type="gene ID" value="DDB_G0289149"/>
</dbReference>
<dbReference type="GeneID" id="8626986"/>
<dbReference type="KEGG" id="ddi:DDB_G0289149"/>
<dbReference type="dictyBase" id="DDB_G0289149">
    <property type="gene designation" value="litaf"/>
</dbReference>
<dbReference type="VEuPathDB" id="AmoebaDB:DDB_G0289149"/>
<dbReference type="eggNOG" id="ENOG502RSPP">
    <property type="taxonomic scope" value="Eukaryota"/>
</dbReference>
<dbReference type="HOGENOM" id="CLU_1386668_0_0_1"/>
<dbReference type="InParanoid" id="Q54HX8"/>
<dbReference type="OMA" id="YTYKRVC"/>
<dbReference type="PRO" id="PR:Q54HX8"/>
<dbReference type="Proteomes" id="UP000002195">
    <property type="component" value="Chromosome 5"/>
</dbReference>
<dbReference type="GO" id="GO:0031902">
    <property type="term" value="C:late endosome membrane"/>
    <property type="evidence" value="ECO:0007669"/>
    <property type="project" value="UniProtKB-SubCell"/>
</dbReference>
<dbReference type="GO" id="GO:0005765">
    <property type="term" value="C:lysosomal membrane"/>
    <property type="evidence" value="ECO:0007669"/>
    <property type="project" value="UniProtKB-SubCell"/>
</dbReference>
<dbReference type="GO" id="GO:0008270">
    <property type="term" value="F:zinc ion binding"/>
    <property type="evidence" value="ECO:0000318"/>
    <property type="project" value="GO_Central"/>
</dbReference>
<dbReference type="GO" id="GO:0009617">
    <property type="term" value="P:response to bacterium"/>
    <property type="evidence" value="ECO:0007007"/>
    <property type="project" value="dictyBase"/>
</dbReference>
<dbReference type="InterPro" id="IPR006629">
    <property type="entry name" value="LITAF"/>
</dbReference>
<dbReference type="InterPro" id="IPR037519">
    <property type="entry name" value="LITAF_fam"/>
</dbReference>
<dbReference type="PANTHER" id="PTHR23292:SF6">
    <property type="entry name" value="FI16602P1-RELATED"/>
    <property type="match status" value="1"/>
</dbReference>
<dbReference type="PANTHER" id="PTHR23292">
    <property type="entry name" value="LIPOPOLYSACCHARIDE-INDUCED TUMOR NECROSIS FACTOR-ALPHA FACTOR"/>
    <property type="match status" value="1"/>
</dbReference>
<dbReference type="Pfam" id="PF10601">
    <property type="entry name" value="zf-LITAF-like"/>
    <property type="match status" value="1"/>
</dbReference>
<dbReference type="SMART" id="SM00714">
    <property type="entry name" value="LITAF"/>
    <property type="match status" value="1"/>
</dbReference>
<dbReference type="PROSITE" id="PS51837">
    <property type="entry name" value="LITAF"/>
    <property type="match status" value="1"/>
</dbReference>
<sequence length="181" mass="20589">MGQDNINLNKVDGQPSSPPQEQQQQQQYPPQGYPQQQQYPPQQGYPPQQYPPQQGYPPQQYPPQQGYPQQQPPQQYPAPVGAPQQPYMATQQVVVQQVYVQPTFGVVPVDCICQHCQTRMSTKTSYKSGSMVWLVCVLLIIFGCWLGCCLIPFGIDSLKDVQHKCSHCKKVLYRFDRMSGK</sequence>
<organism>
    <name type="scientific">Dictyostelium discoideum</name>
    <name type="common">Social amoeba</name>
    <dbReference type="NCBI Taxonomy" id="44689"/>
    <lineage>
        <taxon>Eukaryota</taxon>
        <taxon>Amoebozoa</taxon>
        <taxon>Evosea</taxon>
        <taxon>Eumycetozoa</taxon>
        <taxon>Dictyostelia</taxon>
        <taxon>Dictyosteliales</taxon>
        <taxon>Dictyosteliaceae</taxon>
        <taxon>Dictyostelium</taxon>
    </lineage>
</organism>
<feature type="chain" id="PRO_0000328224" description="Cell death-inducing p53-target protein 1 homolog">
    <location>
        <begin position="1"/>
        <end position="181"/>
    </location>
</feature>
<feature type="domain" description="LITAF" evidence="3">
    <location>
        <begin position="90"/>
        <end position="177"/>
    </location>
</feature>
<feature type="region of interest" description="Disordered" evidence="4">
    <location>
        <begin position="1"/>
        <end position="82"/>
    </location>
</feature>
<feature type="region of interest" description="Membrane-binding amphipathic helix" evidence="5">
    <location>
        <begin position="131"/>
        <end position="151"/>
    </location>
</feature>
<feature type="compositionally biased region" description="Low complexity" evidence="4">
    <location>
        <begin position="13"/>
        <end position="69"/>
    </location>
</feature>
<feature type="binding site" evidence="1">
    <location>
        <position position="113"/>
    </location>
    <ligand>
        <name>Zn(2+)</name>
        <dbReference type="ChEBI" id="CHEBI:29105"/>
    </ligand>
</feature>
<feature type="binding site" evidence="1">
    <location>
        <position position="116"/>
    </location>
    <ligand>
        <name>Zn(2+)</name>
        <dbReference type="ChEBI" id="CHEBI:29105"/>
    </ligand>
</feature>
<feature type="binding site" evidence="1">
    <location>
        <position position="165"/>
    </location>
    <ligand>
        <name>Zn(2+)</name>
        <dbReference type="ChEBI" id="CHEBI:29105"/>
    </ligand>
</feature>
<feature type="binding site" evidence="1">
    <location>
        <position position="168"/>
    </location>
    <ligand>
        <name>Zn(2+)</name>
        <dbReference type="ChEBI" id="CHEBI:29105"/>
    </ligand>
</feature>
<gene>
    <name type="primary">litaf</name>
    <name type="ORF">DDB_G0289149</name>
</gene>
<reference key="1">
    <citation type="journal article" date="2005" name="Nature">
        <title>The genome of the social amoeba Dictyostelium discoideum.</title>
        <authorList>
            <person name="Eichinger L."/>
            <person name="Pachebat J.A."/>
            <person name="Gloeckner G."/>
            <person name="Rajandream M.A."/>
            <person name="Sucgang R."/>
            <person name="Berriman M."/>
            <person name="Song J."/>
            <person name="Olsen R."/>
            <person name="Szafranski K."/>
            <person name="Xu Q."/>
            <person name="Tunggal B."/>
            <person name="Kummerfeld S."/>
            <person name="Madera M."/>
            <person name="Konfortov B.A."/>
            <person name="Rivero F."/>
            <person name="Bankier A.T."/>
            <person name="Lehmann R."/>
            <person name="Hamlin N."/>
            <person name="Davies R."/>
            <person name="Gaudet P."/>
            <person name="Fey P."/>
            <person name="Pilcher K."/>
            <person name="Chen G."/>
            <person name="Saunders D."/>
            <person name="Sodergren E.J."/>
            <person name="Davis P."/>
            <person name="Kerhornou A."/>
            <person name="Nie X."/>
            <person name="Hall N."/>
            <person name="Anjard C."/>
            <person name="Hemphill L."/>
            <person name="Bason N."/>
            <person name="Farbrother P."/>
            <person name="Desany B."/>
            <person name="Just E."/>
            <person name="Morio T."/>
            <person name="Rost R."/>
            <person name="Churcher C.M."/>
            <person name="Cooper J."/>
            <person name="Haydock S."/>
            <person name="van Driessche N."/>
            <person name="Cronin A."/>
            <person name="Goodhead I."/>
            <person name="Muzny D.M."/>
            <person name="Mourier T."/>
            <person name="Pain A."/>
            <person name="Lu M."/>
            <person name="Harper D."/>
            <person name="Lindsay R."/>
            <person name="Hauser H."/>
            <person name="James K.D."/>
            <person name="Quiles M."/>
            <person name="Madan Babu M."/>
            <person name="Saito T."/>
            <person name="Buchrieser C."/>
            <person name="Wardroper A."/>
            <person name="Felder M."/>
            <person name="Thangavelu M."/>
            <person name="Johnson D."/>
            <person name="Knights A."/>
            <person name="Loulseged H."/>
            <person name="Mungall K.L."/>
            <person name="Oliver K."/>
            <person name="Price C."/>
            <person name="Quail M.A."/>
            <person name="Urushihara H."/>
            <person name="Hernandez J."/>
            <person name="Rabbinowitsch E."/>
            <person name="Steffen D."/>
            <person name="Sanders M."/>
            <person name="Ma J."/>
            <person name="Kohara Y."/>
            <person name="Sharp S."/>
            <person name="Simmonds M.N."/>
            <person name="Spiegler S."/>
            <person name="Tivey A."/>
            <person name="Sugano S."/>
            <person name="White B."/>
            <person name="Walker D."/>
            <person name="Woodward J.R."/>
            <person name="Winckler T."/>
            <person name="Tanaka Y."/>
            <person name="Shaulsky G."/>
            <person name="Schleicher M."/>
            <person name="Weinstock G.M."/>
            <person name="Rosenthal A."/>
            <person name="Cox E.C."/>
            <person name="Chisholm R.L."/>
            <person name="Gibbs R.A."/>
            <person name="Loomis W.F."/>
            <person name="Platzer M."/>
            <person name="Kay R.R."/>
            <person name="Williams J.G."/>
            <person name="Dear P.H."/>
            <person name="Noegel A.A."/>
            <person name="Barrell B.G."/>
            <person name="Kuspa A."/>
        </authorList>
    </citation>
    <scope>NUCLEOTIDE SEQUENCE [LARGE SCALE GENOMIC DNA]</scope>
    <source>
        <strain>AX4</strain>
    </source>
</reference>
<evidence type="ECO:0000250" key="1">
    <source>
        <dbReference type="UniProtKB" id="Q99732"/>
    </source>
</evidence>
<evidence type="ECO:0000250" key="2">
    <source>
        <dbReference type="UniProtKB" id="Q9H305"/>
    </source>
</evidence>
<evidence type="ECO:0000255" key="3">
    <source>
        <dbReference type="PROSITE-ProRule" id="PRU01181"/>
    </source>
</evidence>
<evidence type="ECO:0000256" key="4">
    <source>
        <dbReference type="SAM" id="MobiDB-lite"/>
    </source>
</evidence>
<evidence type="ECO:0000305" key="5"/>